<accession>Q32BV3</accession>
<reference key="1">
    <citation type="journal article" date="2005" name="Nucleic Acids Res.">
        <title>Genome dynamics and diversity of Shigella species, the etiologic agents of bacillary dysentery.</title>
        <authorList>
            <person name="Yang F."/>
            <person name="Yang J."/>
            <person name="Zhang X."/>
            <person name="Chen L."/>
            <person name="Jiang Y."/>
            <person name="Yan Y."/>
            <person name="Tang X."/>
            <person name="Wang J."/>
            <person name="Xiong Z."/>
            <person name="Dong J."/>
            <person name="Xue Y."/>
            <person name="Zhu Y."/>
            <person name="Xu X."/>
            <person name="Sun L."/>
            <person name="Chen S."/>
            <person name="Nie H."/>
            <person name="Peng J."/>
            <person name="Xu J."/>
            <person name="Wang Y."/>
            <person name="Yuan Z."/>
            <person name="Wen Y."/>
            <person name="Yao Z."/>
            <person name="Shen Y."/>
            <person name="Qiang B."/>
            <person name="Hou Y."/>
            <person name="Yu J."/>
            <person name="Jin Q."/>
        </authorList>
    </citation>
    <scope>NUCLEOTIDE SEQUENCE [LARGE SCALE GENOMIC DNA]</scope>
    <source>
        <strain>Sd197</strain>
    </source>
</reference>
<name>SYK_SHIDS</name>
<keyword id="KW-0030">Aminoacyl-tRNA synthetase</keyword>
<keyword id="KW-0067">ATP-binding</keyword>
<keyword id="KW-0963">Cytoplasm</keyword>
<keyword id="KW-0436">Ligase</keyword>
<keyword id="KW-0460">Magnesium</keyword>
<keyword id="KW-0479">Metal-binding</keyword>
<keyword id="KW-0547">Nucleotide-binding</keyword>
<keyword id="KW-0648">Protein biosynthesis</keyword>
<keyword id="KW-1185">Reference proteome</keyword>
<evidence type="ECO:0000255" key="1">
    <source>
        <dbReference type="HAMAP-Rule" id="MF_00252"/>
    </source>
</evidence>
<gene>
    <name evidence="1" type="primary">lysS</name>
    <name type="ordered locus">SDY_3192</name>
</gene>
<dbReference type="EC" id="6.1.1.6" evidence="1"/>
<dbReference type="EMBL" id="CP000034">
    <property type="protein sequence ID" value="ABB63202.1"/>
    <property type="molecule type" value="Genomic_DNA"/>
</dbReference>
<dbReference type="RefSeq" id="WP_000003082.1">
    <property type="nucleotide sequence ID" value="NC_007606.1"/>
</dbReference>
<dbReference type="RefSeq" id="YP_404693.1">
    <property type="nucleotide sequence ID" value="NC_007606.1"/>
</dbReference>
<dbReference type="SMR" id="Q32BV3"/>
<dbReference type="STRING" id="300267.SDY_3192"/>
<dbReference type="EnsemblBacteria" id="ABB63202">
    <property type="protein sequence ID" value="ABB63202"/>
    <property type="gene ID" value="SDY_3192"/>
</dbReference>
<dbReference type="KEGG" id="sdy:SDY_3192"/>
<dbReference type="PATRIC" id="fig|300267.13.peg.3814"/>
<dbReference type="HOGENOM" id="CLU_008255_6_0_6"/>
<dbReference type="Proteomes" id="UP000002716">
    <property type="component" value="Chromosome"/>
</dbReference>
<dbReference type="GO" id="GO:0005829">
    <property type="term" value="C:cytosol"/>
    <property type="evidence" value="ECO:0007669"/>
    <property type="project" value="TreeGrafter"/>
</dbReference>
<dbReference type="GO" id="GO:0005524">
    <property type="term" value="F:ATP binding"/>
    <property type="evidence" value="ECO:0007669"/>
    <property type="project" value="UniProtKB-UniRule"/>
</dbReference>
<dbReference type="GO" id="GO:0004824">
    <property type="term" value="F:lysine-tRNA ligase activity"/>
    <property type="evidence" value="ECO:0007669"/>
    <property type="project" value="UniProtKB-UniRule"/>
</dbReference>
<dbReference type="GO" id="GO:0000287">
    <property type="term" value="F:magnesium ion binding"/>
    <property type="evidence" value="ECO:0007669"/>
    <property type="project" value="UniProtKB-UniRule"/>
</dbReference>
<dbReference type="GO" id="GO:0000049">
    <property type="term" value="F:tRNA binding"/>
    <property type="evidence" value="ECO:0007669"/>
    <property type="project" value="TreeGrafter"/>
</dbReference>
<dbReference type="GO" id="GO:0006430">
    <property type="term" value="P:lysyl-tRNA aminoacylation"/>
    <property type="evidence" value="ECO:0007669"/>
    <property type="project" value="UniProtKB-UniRule"/>
</dbReference>
<dbReference type="CDD" id="cd00775">
    <property type="entry name" value="LysRS_core"/>
    <property type="match status" value="1"/>
</dbReference>
<dbReference type="CDD" id="cd04322">
    <property type="entry name" value="LysRS_N"/>
    <property type="match status" value="1"/>
</dbReference>
<dbReference type="FunFam" id="2.40.50.140:FF:000024">
    <property type="entry name" value="Lysine--tRNA ligase"/>
    <property type="match status" value="1"/>
</dbReference>
<dbReference type="FunFam" id="3.30.930.10:FF:000001">
    <property type="entry name" value="Lysine--tRNA ligase"/>
    <property type="match status" value="1"/>
</dbReference>
<dbReference type="Gene3D" id="3.30.930.10">
    <property type="entry name" value="Bira Bifunctional Protein, Domain 2"/>
    <property type="match status" value="1"/>
</dbReference>
<dbReference type="Gene3D" id="2.40.50.140">
    <property type="entry name" value="Nucleic acid-binding proteins"/>
    <property type="match status" value="1"/>
</dbReference>
<dbReference type="HAMAP" id="MF_00252">
    <property type="entry name" value="Lys_tRNA_synth_class2"/>
    <property type="match status" value="1"/>
</dbReference>
<dbReference type="InterPro" id="IPR004364">
    <property type="entry name" value="Aa-tRNA-synt_II"/>
</dbReference>
<dbReference type="InterPro" id="IPR006195">
    <property type="entry name" value="aa-tRNA-synth_II"/>
</dbReference>
<dbReference type="InterPro" id="IPR045864">
    <property type="entry name" value="aa-tRNA-synth_II/BPL/LPL"/>
</dbReference>
<dbReference type="InterPro" id="IPR002313">
    <property type="entry name" value="Lys-tRNA-ligase_II"/>
</dbReference>
<dbReference type="InterPro" id="IPR034762">
    <property type="entry name" value="Lys-tRNA-ligase_II_bac/euk"/>
</dbReference>
<dbReference type="InterPro" id="IPR044136">
    <property type="entry name" value="Lys-tRNA-ligase_II_N"/>
</dbReference>
<dbReference type="InterPro" id="IPR018149">
    <property type="entry name" value="Lys-tRNA-synth_II_C"/>
</dbReference>
<dbReference type="InterPro" id="IPR012340">
    <property type="entry name" value="NA-bd_OB-fold"/>
</dbReference>
<dbReference type="InterPro" id="IPR004365">
    <property type="entry name" value="NA-bd_OB_tRNA"/>
</dbReference>
<dbReference type="NCBIfam" id="TIGR00499">
    <property type="entry name" value="lysS_bact"/>
    <property type="match status" value="1"/>
</dbReference>
<dbReference type="NCBIfam" id="NF001756">
    <property type="entry name" value="PRK00484.1"/>
    <property type="match status" value="1"/>
</dbReference>
<dbReference type="NCBIfam" id="NF009101">
    <property type="entry name" value="PRK12445.1"/>
    <property type="match status" value="1"/>
</dbReference>
<dbReference type="PANTHER" id="PTHR42918:SF15">
    <property type="entry name" value="LYSINE--TRNA LIGASE, CHLOROPLASTIC_MITOCHONDRIAL"/>
    <property type="match status" value="1"/>
</dbReference>
<dbReference type="PANTHER" id="PTHR42918">
    <property type="entry name" value="LYSYL-TRNA SYNTHETASE"/>
    <property type="match status" value="1"/>
</dbReference>
<dbReference type="Pfam" id="PF00152">
    <property type="entry name" value="tRNA-synt_2"/>
    <property type="match status" value="1"/>
</dbReference>
<dbReference type="Pfam" id="PF01336">
    <property type="entry name" value="tRNA_anti-codon"/>
    <property type="match status" value="1"/>
</dbReference>
<dbReference type="PIRSF" id="PIRSF039101">
    <property type="entry name" value="LysRS2"/>
    <property type="match status" value="1"/>
</dbReference>
<dbReference type="PRINTS" id="PR00982">
    <property type="entry name" value="TRNASYNTHLYS"/>
</dbReference>
<dbReference type="SUPFAM" id="SSF55681">
    <property type="entry name" value="Class II aaRS and biotin synthetases"/>
    <property type="match status" value="1"/>
</dbReference>
<dbReference type="SUPFAM" id="SSF50249">
    <property type="entry name" value="Nucleic acid-binding proteins"/>
    <property type="match status" value="1"/>
</dbReference>
<dbReference type="PROSITE" id="PS50862">
    <property type="entry name" value="AA_TRNA_LIGASE_II"/>
    <property type="match status" value="1"/>
</dbReference>
<proteinExistence type="inferred from homology"/>
<feature type="chain" id="PRO_1000012936" description="Lysine--tRNA ligase">
    <location>
        <begin position="1"/>
        <end position="505"/>
    </location>
</feature>
<feature type="binding site" evidence="1">
    <location>
        <position position="415"/>
    </location>
    <ligand>
        <name>Mg(2+)</name>
        <dbReference type="ChEBI" id="CHEBI:18420"/>
        <label>1</label>
    </ligand>
</feature>
<feature type="binding site" evidence="1">
    <location>
        <position position="422"/>
    </location>
    <ligand>
        <name>Mg(2+)</name>
        <dbReference type="ChEBI" id="CHEBI:18420"/>
        <label>1</label>
    </ligand>
</feature>
<feature type="binding site" evidence="1">
    <location>
        <position position="422"/>
    </location>
    <ligand>
        <name>Mg(2+)</name>
        <dbReference type="ChEBI" id="CHEBI:18420"/>
        <label>2</label>
    </ligand>
</feature>
<comment type="catalytic activity">
    <reaction evidence="1">
        <text>tRNA(Lys) + L-lysine + ATP = L-lysyl-tRNA(Lys) + AMP + diphosphate</text>
        <dbReference type="Rhea" id="RHEA:20792"/>
        <dbReference type="Rhea" id="RHEA-COMP:9696"/>
        <dbReference type="Rhea" id="RHEA-COMP:9697"/>
        <dbReference type="ChEBI" id="CHEBI:30616"/>
        <dbReference type="ChEBI" id="CHEBI:32551"/>
        <dbReference type="ChEBI" id="CHEBI:33019"/>
        <dbReference type="ChEBI" id="CHEBI:78442"/>
        <dbReference type="ChEBI" id="CHEBI:78529"/>
        <dbReference type="ChEBI" id="CHEBI:456215"/>
        <dbReference type="EC" id="6.1.1.6"/>
    </reaction>
</comment>
<comment type="cofactor">
    <cofactor evidence="1">
        <name>Mg(2+)</name>
        <dbReference type="ChEBI" id="CHEBI:18420"/>
    </cofactor>
    <text evidence="1">Binds 3 Mg(2+) ions per subunit.</text>
</comment>
<comment type="subunit">
    <text evidence="1">Homodimer.</text>
</comment>
<comment type="subcellular location">
    <subcellularLocation>
        <location evidence="1">Cytoplasm</location>
    </subcellularLocation>
</comment>
<comment type="similarity">
    <text evidence="1">Belongs to the class-II aminoacyl-tRNA synthetase family.</text>
</comment>
<protein>
    <recommendedName>
        <fullName evidence="1">Lysine--tRNA ligase</fullName>
        <ecNumber evidence="1">6.1.1.6</ecNumber>
    </recommendedName>
    <alternativeName>
        <fullName evidence="1">Lysyl-tRNA synthetase</fullName>
        <shortName evidence="1">LysRS</shortName>
    </alternativeName>
</protein>
<sequence>MSEQHAQGADAVVDLNNELKTRREKLANLREQGIAFPNDFRRDHTSDQLHTEFDGKENEELEALNIEVAVAGRMMTRRIMGKASFVTLQDVGGRIQLYVARDDLPEGVYNEQFKKWDLGDILGAKGKLFKTKTGELSIHCTELRLLTKALRPLPDKFHGLQDQEARYRQRYLDLISNDESRNTFKVRSQILSGIRQFMVNRGFMEVETPMMQVIPGGAAARPFITHHNALDLDMYLRIAPELYLKRLVVGGFERVFEINRNFRNEGISVRHNPEFTMMELYMAYADYKDLIELTESLFRTLAQNILGKTEVTYGDVTLDFGKPFEKLTMREAIKKYRPETDMADLDNFDSAKAIAESIGIHVEKSWGLGRIVTEIFEEVAEAHLIQPTFITEYPAEVSPLARRNDVNPEITDRFEFFIGGREIGNGFSELNDAEDQAQRFLDQVAAKDAGDDEAMFYDEDYVTALEHGLPPTAGLGIGIDRMVMLFTNSHTIRDVILFPAMRPVK</sequence>
<organism>
    <name type="scientific">Shigella dysenteriae serotype 1 (strain Sd197)</name>
    <dbReference type="NCBI Taxonomy" id="300267"/>
    <lineage>
        <taxon>Bacteria</taxon>
        <taxon>Pseudomonadati</taxon>
        <taxon>Pseudomonadota</taxon>
        <taxon>Gammaproteobacteria</taxon>
        <taxon>Enterobacterales</taxon>
        <taxon>Enterobacteriaceae</taxon>
        <taxon>Shigella</taxon>
    </lineage>
</organism>